<comment type="function">
    <text evidence="1">Catalyzes the acyloin condensation reaction between C atoms 2 and 3 of pyruvate and glyceraldehyde 3-phosphate to yield 1-deoxy-D-xylulose-5-phosphate (DXP).</text>
</comment>
<comment type="catalytic activity">
    <reaction evidence="1">
        <text>D-glyceraldehyde 3-phosphate + pyruvate + H(+) = 1-deoxy-D-xylulose 5-phosphate + CO2</text>
        <dbReference type="Rhea" id="RHEA:12605"/>
        <dbReference type="ChEBI" id="CHEBI:15361"/>
        <dbReference type="ChEBI" id="CHEBI:15378"/>
        <dbReference type="ChEBI" id="CHEBI:16526"/>
        <dbReference type="ChEBI" id="CHEBI:57792"/>
        <dbReference type="ChEBI" id="CHEBI:59776"/>
        <dbReference type="EC" id="2.2.1.7"/>
    </reaction>
</comment>
<comment type="cofactor">
    <cofactor evidence="1">
        <name>Mg(2+)</name>
        <dbReference type="ChEBI" id="CHEBI:18420"/>
    </cofactor>
    <text evidence="1">Binds 1 Mg(2+) ion per subunit.</text>
</comment>
<comment type="cofactor">
    <cofactor evidence="1">
        <name>thiamine diphosphate</name>
        <dbReference type="ChEBI" id="CHEBI:58937"/>
    </cofactor>
    <text evidence="1">Binds 1 thiamine pyrophosphate per subunit.</text>
</comment>
<comment type="pathway">
    <text evidence="1">Metabolic intermediate biosynthesis; 1-deoxy-D-xylulose 5-phosphate biosynthesis; 1-deoxy-D-xylulose 5-phosphate from D-glyceraldehyde 3-phosphate and pyruvate: step 1/1.</text>
</comment>
<comment type="subunit">
    <text evidence="1">Homodimer.</text>
</comment>
<comment type="similarity">
    <text evidence="1">Belongs to the transketolase family. DXPS subfamily.</text>
</comment>
<organism>
    <name type="scientific">Geobacter metallireducens (strain ATCC 53774 / DSM 7210 / GS-15)</name>
    <dbReference type="NCBI Taxonomy" id="269799"/>
    <lineage>
        <taxon>Bacteria</taxon>
        <taxon>Pseudomonadati</taxon>
        <taxon>Thermodesulfobacteriota</taxon>
        <taxon>Desulfuromonadia</taxon>
        <taxon>Geobacterales</taxon>
        <taxon>Geobacteraceae</taxon>
        <taxon>Geobacter</taxon>
    </lineage>
</organism>
<protein>
    <recommendedName>
        <fullName evidence="1">1-deoxy-D-xylulose-5-phosphate synthase 1</fullName>
        <ecNumber evidence="1">2.2.1.7</ecNumber>
    </recommendedName>
    <alternativeName>
        <fullName evidence="1">1-deoxyxylulose-5-phosphate synthase 1</fullName>
        <shortName evidence="1">DXP synthase 1</shortName>
        <shortName evidence="1">DXPS 1</shortName>
    </alternativeName>
</protein>
<proteinExistence type="inferred from homology"/>
<reference key="1">
    <citation type="journal article" date="2009" name="BMC Microbiol.">
        <title>The genome sequence of Geobacter metallireducens: features of metabolism, physiology and regulation common and dissimilar to Geobacter sulfurreducens.</title>
        <authorList>
            <person name="Aklujkar M."/>
            <person name="Krushkal J."/>
            <person name="DiBartolo G."/>
            <person name="Lapidus A."/>
            <person name="Land M.L."/>
            <person name="Lovley D.R."/>
        </authorList>
    </citation>
    <scope>NUCLEOTIDE SEQUENCE [LARGE SCALE GENOMIC DNA]</scope>
    <source>
        <strain>ATCC 53774 / DSM 7210 / GS-15</strain>
    </source>
</reference>
<dbReference type="EC" id="2.2.1.7" evidence="1"/>
<dbReference type="EMBL" id="CP000148">
    <property type="protein sequence ID" value="ABB32163.1"/>
    <property type="molecule type" value="Genomic_DNA"/>
</dbReference>
<dbReference type="SMR" id="Q39UB1"/>
<dbReference type="STRING" id="269799.Gmet_1934"/>
<dbReference type="KEGG" id="gme:Gmet_1934"/>
<dbReference type="eggNOG" id="COG1154">
    <property type="taxonomic scope" value="Bacteria"/>
</dbReference>
<dbReference type="HOGENOM" id="CLU_009227_1_4_7"/>
<dbReference type="UniPathway" id="UPA00064">
    <property type="reaction ID" value="UER00091"/>
</dbReference>
<dbReference type="Proteomes" id="UP000007073">
    <property type="component" value="Chromosome"/>
</dbReference>
<dbReference type="GO" id="GO:0005829">
    <property type="term" value="C:cytosol"/>
    <property type="evidence" value="ECO:0007669"/>
    <property type="project" value="TreeGrafter"/>
</dbReference>
<dbReference type="GO" id="GO:0008661">
    <property type="term" value="F:1-deoxy-D-xylulose-5-phosphate synthase activity"/>
    <property type="evidence" value="ECO:0007669"/>
    <property type="project" value="UniProtKB-UniRule"/>
</dbReference>
<dbReference type="GO" id="GO:0000287">
    <property type="term" value="F:magnesium ion binding"/>
    <property type="evidence" value="ECO:0007669"/>
    <property type="project" value="UniProtKB-UniRule"/>
</dbReference>
<dbReference type="GO" id="GO:0030976">
    <property type="term" value="F:thiamine pyrophosphate binding"/>
    <property type="evidence" value="ECO:0007669"/>
    <property type="project" value="UniProtKB-UniRule"/>
</dbReference>
<dbReference type="GO" id="GO:0052865">
    <property type="term" value="P:1-deoxy-D-xylulose 5-phosphate biosynthetic process"/>
    <property type="evidence" value="ECO:0007669"/>
    <property type="project" value="UniProtKB-UniPathway"/>
</dbReference>
<dbReference type="GO" id="GO:0019288">
    <property type="term" value="P:isopentenyl diphosphate biosynthetic process, methylerythritol 4-phosphate pathway"/>
    <property type="evidence" value="ECO:0007669"/>
    <property type="project" value="TreeGrafter"/>
</dbReference>
<dbReference type="GO" id="GO:0016114">
    <property type="term" value="P:terpenoid biosynthetic process"/>
    <property type="evidence" value="ECO:0007669"/>
    <property type="project" value="UniProtKB-UniRule"/>
</dbReference>
<dbReference type="GO" id="GO:0009228">
    <property type="term" value="P:thiamine biosynthetic process"/>
    <property type="evidence" value="ECO:0007669"/>
    <property type="project" value="UniProtKB-UniRule"/>
</dbReference>
<dbReference type="CDD" id="cd02007">
    <property type="entry name" value="TPP_DXS"/>
    <property type="match status" value="1"/>
</dbReference>
<dbReference type="CDD" id="cd07033">
    <property type="entry name" value="TPP_PYR_DXS_TK_like"/>
    <property type="match status" value="1"/>
</dbReference>
<dbReference type="FunFam" id="3.40.50.920:FF:000002">
    <property type="entry name" value="1-deoxy-D-xylulose-5-phosphate synthase"/>
    <property type="match status" value="1"/>
</dbReference>
<dbReference type="FunFam" id="3.40.50.970:FF:000005">
    <property type="entry name" value="1-deoxy-D-xylulose-5-phosphate synthase"/>
    <property type="match status" value="1"/>
</dbReference>
<dbReference type="Gene3D" id="3.40.50.920">
    <property type="match status" value="1"/>
</dbReference>
<dbReference type="Gene3D" id="3.40.50.970">
    <property type="match status" value="2"/>
</dbReference>
<dbReference type="HAMAP" id="MF_00315">
    <property type="entry name" value="DXP_synth"/>
    <property type="match status" value="1"/>
</dbReference>
<dbReference type="InterPro" id="IPR005477">
    <property type="entry name" value="Dxylulose-5-P_synthase"/>
</dbReference>
<dbReference type="InterPro" id="IPR029061">
    <property type="entry name" value="THDP-binding"/>
</dbReference>
<dbReference type="InterPro" id="IPR009014">
    <property type="entry name" value="Transketo_C/PFOR_II"/>
</dbReference>
<dbReference type="InterPro" id="IPR005475">
    <property type="entry name" value="Transketolase-like_Pyr-bd"/>
</dbReference>
<dbReference type="InterPro" id="IPR020826">
    <property type="entry name" value="Transketolase_BS"/>
</dbReference>
<dbReference type="InterPro" id="IPR033248">
    <property type="entry name" value="Transketolase_C"/>
</dbReference>
<dbReference type="InterPro" id="IPR049557">
    <property type="entry name" value="Transketolase_CS"/>
</dbReference>
<dbReference type="NCBIfam" id="TIGR00204">
    <property type="entry name" value="dxs"/>
    <property type="match status" value="1"/>
</dbReference>
<dbReference type="NCBIfam" id="NF003933">
    <property type="entry name" value="PRK05444.2-2"/>
    <property type="match status" value="1"/>
</dbReference>
<dbReference type="PANTHER" id="PTHR43322">
    <property type="entry name" value="1-D-DEOXYXYLULOSE 5-PHOSPHATE SYNTHASE-RELATED"/>
    <property type="match status" value="1"/>
</dbReference>
<dbReference type="PANTHER" id="PTHR43322:SF5">
    <property type="entry name" value="1-DEOXY-D-XYLULOSE-5-PHOSPHATE SYNTHASE, CHLOROPLASTIC"/>
    <property type="match status" value="1"/>
</dbReference>
<dbReference type="Pfam" id="PF13292">
    <property type="entry name" value="DXP_synthase_N"/>
    <property type="match status" value="1"/>
</dbReference>
<dbReference type="Pfam" id="PF02779">
    <property type="entry name" value="Transket_pyr"/>
    <property type="match status" value="1"/>
</dbReference>
<dbReference type="Pfam" id="PF02780">
    <property type="entry name" value="Transketolase_C"/>
    <property type="match status" value="1"/>
</dbReference>
<dbReference type="SMART" id="SM00861">
    <property type="entry name" value="Transket_pyr"/>
    <property type="match status" value="1"/>
</dbReference>
<dbReference type="SUPFAM" id="SSF52518">
    <property type="entry name" value="Thiamin diphosphate-binding fold (THDP-binding)"/>
    <property type="match status" value="2"/>
</dbReference>
<dbReference type="SUPFAM" id="SSF52922">
    <property type="entry name" value="TK C-terminal domain-like"/>
    <property type="match status" value="1"/>
</dbReference>
<dbReference type="PROSITE" id="PS00801">
    <property type="entry name" value="TRANSKETOLASE_1"/>
    <property type="match status" value="1"/>
</dbReference>
<dbReference type="PROSITE" id="PS00802">
    <property type="entry name" value="TRANSKETOLASE_2"/>
    <property type="match status" value="1"/>
</dbReference>
<sequence>MTAILDTIESPCDLKGVTQRELAQLAAELREKIITVCARNGGHLAPSLGVVELTLALHRVFDSPADKIIWDVGHQAYAHKLLTGRRDRFATLRTLGGISGFPKRCESSHDAFDTGHTSTSISAALGFAVARDLRGERNKVVAVIGDGSMTGGLAYEGLNNAGHLNKDLVVVLNDNEMSIAENVGALSNFLNRTVTSEFVHTMKKDLEGFLGGLDRIGHGVLKVAKRAEESLKGLFTPGMLFEAFGFEYIGPIDGHDTARLMETFEKVKRFDDAVLIHVLTKKGRGYPPAEEKPALFHGVGPFELETGKVIKGKGGAASYTGVFGEAIRKIAAEDERVIALTAAMPDGTGLTPFAADYPTRFFDVGIAEQHGVTFAAGLAAEGYRPVFAVYSSFLQRAYDQVFHDVCLQNLPVTFAIDRAGVVGSDGPTHHGLFDLAYLRHLPNMVVMAPKDENELQHLLLTAIEHDGPAAVRYPRGNGYGVSLDQTCSVLPIGKGEILREGLDGALLAIGSTVYPAREAAEALAAEGIDLAVVNARFVKPLDRDLILSLARTTGRLIIVEENVIQGGFGTAVLELLEEEGINGVKVLRLGYPDRYVEQGEQHELRAQYGLDAPGITARVRTFMKG</sequence>
<accession>Q39UB1</accession>
<feature type="chain" id="PRO_0000256422" description="1-deoxy-D-xylulose-5-phosphate synthase 1">
    <location>
        <begin position="1"/>
        <end position="625"/>
    </location>
</feature>
<feature type="binding site" evidence="1">
    <location>
        <position position="74"/>
    </location>
    <ligand>
        <name>thiamine diphosphate</name>
        <dbReference type="ChEBI" id="CHEBI:58937"/>
    </ligand>
</feature>
<feature type="binding site" evidence="1">
    <location>
        <begin position="115"/>
        <end position="117"/>
    </location>
    <ligand>
        <name>thiamine diphosphate</name>
        <dbReference type="ChEBI" id="CHEBI:58937"/>
    </ligand>
</feature>
<feature type="binding site" evidence="1">
    <location>
        <position position="146"/>
    </location>
    <ligand>
        <name>Mg(2+)</name>
        <dbReference type="ChEBI" id="CHEBI:18420"/>
    </ligand>
</feature>
<feature type="binding site" evidence="1">
    <location>
        <begin position="147"/>
        <end position="148"/>
    </location>
    <ligand>
        <name>thiamine diphosphate</name>
        <dbReference type="ChEBI" id="CHEBI:58937"/>
    </ligand>
</feature>
<feature type="binding site" evidence="1">
    <location>
        <position position="175"/>
    </location>
    <ligand>
        <name>Mg(2+)</name>
        <dbReference type="ChEBI" id="CHEBI:18420"/>
    </ligand>
</feature>
<feature type="binding site" evidence="1">
    <location>
        <position position="175"/>
    </location>
    <ligand>
        <name>thiamine diphosphate</name>
        <dbReference type="ChEBI" id="CHEBI:58937"/>
    </ligand>
</feature>
<feature type="binding site" evidence="1">
    <location>
        <position position="286"/>
    </location>
    <ligand>
        <name>thiamine diphosphate</name>
        <dbReference type="ChEBI" id="CHEBI:58937"/>
    </ligand>
</feature>
<feature type="binding site" evidence="1">
    <location>
        <position position="368"/>
    </location>
    <ligand>
        <name>thiamine diphosphate</name>
        <dbReference type="ChEBI" id="CHEBI:58937"/>
    </ligand>
</feature>
<evidence type="ECO:0000255" key="1">
    <source>
        <dbReference type="HAMAP-Rule" id="MF_00315"/>
    </source>
</evidence>
<gene>
    <name evidence="1" type="primary">dxs1</name>
    <name type="ordered locus">Gmet_1934</name>
</gene>
<name>DXS1_GEOMG</name>
<keyword id="KW-0414">Isoprene biosynthesis</keyword>
<keyword id="KW-0460">Magnesium</keyword>
<keyword id="KW-0479">Metal-binding</keyword>
<keyword id="KW-1185">Reference proteome</keyword>
<keyword id="KW-0784">Thiamine biosynthesis</keyword>
<keyword id="KW-0786">Thiamine pyrophosphate</keyword>
<keyword id="KW-0808">Transferase</keyword>